<proteinExistence type="evidence at protein level"/>
<accession>Q9Z9H5</accession>
<accession>Q5SHR7</accession>
<evidence type="ECO:0000255" key="1">
    <source>
        <dbReference type="HAMAP-Rule" id="MF_01368"/>
    </source>
</evidence>
<evidence type="ECO:0000269" key="2">
    <source>
    </source>
</evidence>
<evidence type="ECO:0000305" key="3"/>
<evidence type="ECO:0007829" key="4">
    <source>
        <dbReference type="PDB" id="1GD8"/>
    </source>
</evidence>
<sequence>MRHLKSGRKLNRHSSHRLALYRNQAKSLLTHGRITTTVPKAKELRGFVDHLIHLAKRGDLHARRLVLRDLQDVKLVRKLFDEIAPRYRDRQGGYTRVLKLAERRRGDGAPLALVELVE</sequence>
<protein>
    <recommendedName>
        <fullName evidence="1">Large ribosomal subunit protein bL17</fullName>
    </recommendedName>
    <alternativeName>
        <fullName evidence="3">50S ribosomal protein L17</fullName>
    </alternativeName>
</protein>
<name>RL17_THET8</name>
<gene>
    <name evidence="1" type="primary">rplQ</name>
    <name evidence="1" type="synonym">rpl17</name>
    <name type="ordered locus">TTHA1663</name>
</gene>
<keyword id="KW-0002">3D-structure</keyword>
<keyword id="KW-0903">Direct protein sequencing</keyword>
<keyword id="KW-1185">Reference proteome</keyword>
<keyword id="KW-0687">Ribonucleoprotein</keyword>
<keyword id="KW-0689">Ribosomal protein</keyword>
<comment type="subunit">
    <text evidence="1">Part of the 50S ribosomal subunit. Contacts protein L32.</text>
</comment>
<comment type="mass spectrometry"/>
<comment type="similarity">
    <text evidence="1">Belongs to the bacterial ribosomal protein bL17 family.</text>
</comment>
<reference key="1">
    <citation type="journal article" date="1999" name="J. Biochem.">
        <title>Cloning of the RNA polymerase alpha subunit gene from Thermus thermophilus HB8 and characterization of the protein.</title>
        <authorList>
            <person name="Wada T."/>
            <person name="Yamazaki T."/>
            <person name="Kuramitsu S."/>
            <person name="Kyogoku Y."/>
        </authorList>
    </citation>
    <scope>NUCLEOTIDE SEQUENCE [GENOMIC DNA]</scope>
</reference>
<reference key="2">
    <citation type="submission" date="2004-11" db="EMBL/GenBank/DDBJ databases">
        <title>Complete genome sequence of Thermus thermophilus HB8.</title>
        <authorList>
            <person name="Masui R."/>
            <person name="Kurokawa K."/>
            <person name="Nakagawa N."/>
            <person name="Tokunaga F."/>
            <person name="Koyama Y."/>
            <person name="Shibata T."/>
            <person name="Oshima T."/>
            <person name="Yokoyama S."/>
            <person name="Yasunaga T."/>
            <person name="Kuramitsu S."/>
        </authorList>
    </citation>
    <scope>NUCLEOTIDE SEQUENCE [LARGE SCALE GENOMIC DNA]</scope>
    <source>
        <strain>ATCC 27634 / DSM 579 / HB8</strain>
    </source>
</reference>
<reference key="3">
    <citation type="journal article" date="2000" name="Biol. Chem.">
        <title>Identification of the 50S ribosomal proteins from the eubacterium Thermus thermophilus.</title>
        <authorList>
            <person name="Katsani K.R."/>
            <person name="Tsiboli P."/>
            <person name="Anagnostopoulos K."/>
            <person name="Urlaub H."/>
            <person name="Choli-Papadopoulou T."/>
        </authorList>
    </citation>
    <scope>PROTEIN SEQUENCE OF 1-15</scope>
    <source>
        <strain>ATCC 27634 / DSM 579 / HB8</strain>
    </source>
</reference>
<reference key="4">
    <citation type="journal article" date="2005" name="Proteomics">
        <title>Extending ribosomal protein identifications to unsequenced bacterial strains using matrix-assisted laser desorption/ionization mass spectrometry.</title>
        <authorList>
            <person name="Suh M.-J."/>
            <person name="Hamburg D.M."/>
            <person name="Gregory S.T."/>
            <person name="Dahlberg A.E."/>
            <person name="Limbach P.A."/>
        </authorList>
    </citation>
    <scope>MASS SPECTROMETRY</scope>
    <source>
        <strain>ATCC 27634 / DSM 579 / HB8</strain>
    </source>
</reference>
<reference key="5">
    <citation type="submission" date="2003-01" db="PDB data bank">
        <title>The crystal structure of the bacteria-specific L17 ribosomal protein from Thermus thermophilus.</title>
        <authorList>
            <consortium name="RIKEN structural genomics initiative (RSGI)"/>
        </authorList>
    </citation>
    <scope>X-RAY CRYSTALLOGRAPHY (2.3 ANGSTROMS) OF 1-118</scope>
</reference>
<reference key="6">
    <citation type="journal article" date="2005" name="Science">
        <title>Translational operator of mRNA on the ribosome: how repressor proteins exclude ribosome binding.</title>
        <authorList>
            <person name="Jenner L."/>
            <person name="Romby P."/>
            <person name="Rees B."/>
            <person name="Schulze-Briese C."/>
            <person name="Springer M."/>
            <person name="Ehresmann C."/>
            <person name="Ehresmann B."/>
            <person name="Moras D."/>
            <person name="Yusupova G."/>
            <person name="Yusupov M."/>
        </authorList>
    </citation>
    <scope>X-RAY CRYSTALLOGRAPHY (5.5 ANGSTROMS) OF 14-118</scope>
</reference>
<reference key="7">
    <citation type="journal article" date="2005" name="Cell">
        <title>Crystal structures of the ribosome in complex with release factors RF1 and RF2 bound to a cognate stop codon.</title>
        <authorList>
            <person name="Petry S."/>
            <person name="Brodersen D.E."/>
            <person name="Murphy F.V."/>
            <person name="Dunham C.M."/>
            <person name="Selmer M."/>
            <person name="Tarry M.J."/>
            <person name="Kelley A.C."/>
            <person name="Ramakrishnan V."/>
        </authorList>
    </citation>
    <scope>X-RAY CRYSTALLOGRAPHY (5.90 ANGSTROMS) OF 70S RIBOSOME IN COMPLEX WITH RF1 OR RF2</scope>
    <scope>FUNCTION</scope>
    <scope>SUBUNIT</scope>
</reference>
<reference key="8">
    <citation type="journal article" date="2006" name="Science">
        <title>Structure of the 70S ribosome complexed with mRNA and tRNA.</title>
        <authorList>
            <person name="Selmer M."/>
            <person name="Dunham C.M."/>
            <person name="Murphy F.V. IV"/>
            <person name="Weixlbaumer A."/>
            <person name="Petry S."/>
            <person name="Kelley A.C."/>
            <person name="Weir J.R."/>
            <person name="Ramakrishnan V."/>
        </authorList>
    </citation>
    <scope>X-RAY CRYSTALLOGRAPHY (2.8 ANGSTROMS) OF 1-118 OF THE RIBOSOME</scope>
</reference>
<reference key="9">
    <citation type="journal article" date="2008" name="Science">
        <title>Insights into translational termination from the structure of RF2 bound to the ribosome.</title>
        <authorList>
            <person name="Weixlbaumer A."/>
            <person name="Jin H."/>
            <person name="Neubauer C."/>
            <person name="Voorhees R.M."/>
            <person name="Petry S."/>
            <person name="Kelley A.C."/>
            <person name="Ramakrishnan V."/>
        </authorList>
    </citation>
    <scope>X-RAY CRYSTALLOGRAPHY (3.45 ANGSTROMS) OF 70S RIBOSOME IN COMPLEX WITH RF2</scope>
    <scope>SUBUNIT</scope>
</reference>
<reference key="10">
    <citation type="journal article" date="2010" name="Proc. Natl. Acad. Sci. U.S.A.">
        <title>Structure of the 70S ribosome bound to release factor 2 and a substrate analog provides insights into catalysis of peptide release.</title>
        <authorList>
            <person name="Jin H."/>
            <person name="Kelley A.C."/>
            <person name="Loakes D."/>
            <person name="Ramakrishnan V."/>
        </authorList>
    </citation>
    <scope>X-RAY CRYSTALLOGRAPHY (3.10 ANGSTROMS) OF 70S RIBOSOME IN COMPLEX WITH RF2</scope>
    <scope>SUBUNIT</scope>
</reference>
<feature type="chain" id="PRO_0000175547" description="Large ribosomal subunit protein bL17">
    <location>
        <begin position="1"/>
        <end position="118"/>
    </location>
</feature>
<feature type="sequence conflict" description="In Ref. 3; AA sequence." evidence="3" ref="3">
    <original>H</original>
    <variation>A</variation>
    <location>
        <position position="3"/>
    </location>
</feature>
<feature type="sequence conflict" description="In Ref. 3; AA sequence." evidence="3" ref="3">
    <original>H</original>
    <variation>A</variation>
    <location>
        <position position="13"/>
    </location>
</feature>
<feature type="helix" evidence="4">
    <location>
        <begin position="15"/>
        <end position="31"/>
    </location>
</feature>
<feature type="strand" evidence="4">
    <location>
        <begin position="32"/>
        <end position="37"/>
    </location>
</feature>
<feature type="helix" evidence="4">
    <location>
        <begin position="38"/>
        <end position="57"/>
    </location>
</feature>
<feature type="helix" evidence="4">
    <location>
        <begin position="60"/>
        <end position="69"/>
    </location>
</feature>
<feature type="helix" evidence="4">
    <location>
        <begin position="73"/>
        <end position="81"/>
    </location>
</feature>
<feature type="helix" evidence="4">
    <location>
        <begin position="83"/>
        <end position="86"/>
    </location>
</feature>
<feature type="strand" evidence="4">
    <location>
        <begin position="95"/>
        <end position="103"/>
    </location>
</feature>
<feature type="turn" evidence="4">
    <location>
        <begin position="105"/>
        <end position="107"/>
    </location>
</feature>
<feature type="strand" evidence="4">
    <location>
        <begin position="110"/>
        <end position="116"/>
    </location>
</feature>
<organism>
    <name type="scientific">Thermus thermophilus (strain ATCC 27634 / DSM 579 / HB8)</name>
    <dbReference type="NCBI Taxonomy" id="300852"/>
    <lineage>
        <taxon>Bacteria</taxon>
        <taxon>Thermotogati</taxon>
        <taxon>Deinococcota</taxon>
        <taxon>Deinococci</taxon>
        <taxon>Thermales</taxon>
        <taxon>Thermaceae</taxon>
        <taxon>Thermus</taxon>
    </lineage>
</organism>
<dbReference type="EMBL" id="AB024328">
    <property type="protein sequence ID" value="BAA75550.1"/>
    <property type="molecule type" value="Genomic_DNA"/>
</dbReference>
<dbReference type="EMBL" id="AP008226">
    <property type="protein sequence ID" value="BAD71486.1"/>
    <property type="molecule type" value="Genomic_DNA"/>
</dbReference>
<dbReference type="RefSeq" id="WP_008633358.1">
    <property type="nucleotide sequence ID" value="NC_006461.1"/>
</dbReference>
<dbReference type="RefSeq" id="YP_144929.1">
    <property type="nucleotide sequence ID" value="NC_006461.1"/>
</dbReference>
<dbReference type="PDB" id="1GD8">
    <property type="method" value="X-ray"/>
    <property type="resolution" value="2.30 A"/>
    <property type="chains" value="A/B/C/D/E/F/G/H/I=1-118"/>
</dbReference>
<dbReference type="PDB" id="1VVJ">
    <property type="method" value="X-ray"/>
    <property type="resolution" value="3.44 A"/>
    <property type="chains" value="RR/YR=1-118"/>
</dbReference>
<dbReference type="PDB" id="1VY4">
    <property type="method" value="X-ray"/>
    <property type="resolution" value="2.60 A"/>
    <property type="chains" value="BR/DR=1-118"/>
</dbReference>
<dbReference type="PDB" id="1VY5">
    <property type="method" value="X-ray"/>
    <property type="resolution" value="2.55 A"/>
    <property type="chains" value="BR/DR=1-118"/>
</dbReference>
<dbReference type="PDB" id="1VY6">
    <property type="method" value="X-ray"/>
    <property type="resolution" value="2.90 A"/>
    <property type="chains" value="BR/DR=1-118"/>
</dbReference>
<dbReference type="PDB" id="1VY7">
    <property type="method" value="X-ray"/>
    <property type="resolution" value="2.80 A"/>
    <property type="chains" value="BR/DR=1-118"/>
</dbReference>
<dbReference type="PDB" id="4L47">
    <property type="method" value="X-ray"/>
    <property type="resolution" value="3.22 A"/>
    <property type="chains" value="RR/YR=1-118"/>
</dbReference>
<dbReference type="PDB" id="4L71">
    <property type="method" value="X-ray"/>
    <property type="resolution" value="3.90 A"/>
    <property type="chains" value="RR/YR=1-118"/>
</dbReference>
<dbReference type="PDB" id="4LEL">
    <property type="method" value="X-ray"/>
    <property type="resolution" value="3.90 A"/>
    <property type="chains" value="RR/YR=1-118"/>
</dbReference>
<dbReference type="PDB" id="4LFZ">
    <property type="method" value="X-ray"/>
    <property type="resolution" value="3.92 A"/>
    <property type="chains" value="RR/YR=1-118"/>
</dbReference>
<dbReference type="PDB" id="4LNT">
    <property type="method" value="X-ray"/>
    <property type="resolution" value="2.94 A"/>
    <property type="chains" value="RR/YR=1-118"/>
</dbReference>
<dbReference type="PDB" id="4LSK">
    <property type="method" value="X-ray"/>
    <property type="resolution" value="3.48 A"/>
    <property type="chains" value="RR/YR=1-118"/>
</dbReference>
<dbReference type="PDB" id="4LT8">
    <property type="method" value="X-ray"/>
    <property type="resolution" value="3.14 A"/>
    <property type="chains" value="RR/YR=1-118"/>
</dbReference>
<dbReference type="PDB" id="4P6F">
    <property type="method" value="X-ray"/>
    <property type="resolution" value="3.60 A"/>
    <property type="chains" value="RR/YR=1-118"/>
</dbReference>
<dbReference type="PDB" id="4P70">
    <property type="method" value="X-ray"/>
    <property type="resolution" value="3.68 A"/>
    <property type="chains" value="RR/YR=1-118"/>
</dbReference>
<dbReference type="PDB" id="4TUA">
    <property type="method" value="X-ray"/>
    <property type="resolution" value="3.60 A"/>
    <property type="chains" value="RR/YR=1-118"/>
</dbReference>
<dbReference type="PDB" id="4TUB">
    <property type="method" value="X-ray"/>
    <property type="resolution" value="3.60 A"/>
    <property type="chains" value="RR/YR=1-118"/>
</dbReference>
<dbReference type="PDB" id="4TUC">
    <property type="method" value="X-ray"/>
    <property type="resolution" value="3.60 A"/>
    <property type="chains" value="RR/YR=1-118"/>
</dbReference>
<dbReference type="PDB" id="4TUD">
    <property type="method" value="X-ray"/>
    <property type="resolution" value="3.60 A"/>
    <property type="chains" value="RR/YR=1-118"/>
</dbReference>
<dbReference type="PDB" id="4TUE">
    <property type="method" value="X-ray"/>
    <property type="resolution" value="3.50 A"/>
    <property type="chains" value="RR/YR=1-118"/>
</dbReference>
<dbReference type="PDB" id="4V4P">
    <property type="method" value="X-ray"/>
    <property type="resolution" value="5.50 A"/>
    <property type="chains" value="A0=1-118"/>
</dbReference>
<dbReference type="PDB" id="4V4R">
    <property type="method" value="X-ray"/>
    <property type="resolution" value="5.90 A"/>
    <property type="chains" value="BR=1-118"/>
</dbReference>
<dbReference type="PDB" id="4V4S">
    <property type="method" value="X-ray"/>
    <property type="resolution" value="6.76 A"/>
    <property type="chains" value="BR=1-118"/>
</dbReference>
<dbReference type="PDB" id="4V4T">
    <property type="method" value="X-ray"/>
    <property type="resolution" value="6.46 A"/>
    <property type="chains" value="BR=1-118"/>
</dbReference>
<dbReference type="PDB" id="4V4X">
    <property type="method" value="X-ray"/>
    <property type="resolution" value="5.00 A"/>
    <property type="chains" value="BQ=1-118"/>
</dbReference>
<dbReference type="PDB" id="4V4Y">
    <property type="method" value="X-ray"/>
    <property type="resolution" value="5.50 A"/>
    <property type="chains" value="BQ=1-118"/>
</dbReference>
<dbReference type="PDB" id="4V4Z">
    <property type="method" value="X-ray"/>
    <property type="resolution" value="4.51 A"/>
    <property type="chains" value="BQ=1-118"/>
</dbReference>
<dbReference type="PDB" id="4V51">
    <property type="method" value="X-ray"/>
    <property type="resolution" value="2.80 A"/>
    <property type="chains" value="BR/DR=1-118"/>
</dbReference>
<dbReference type="PDB" id="4V5A">
    <property type="method" value="X-ray"/>
    <property type="resolution" value="3.50 A"/>
    <property type="chains" value="BR/DR=1-118"/>
</dbReference>
<dbReference type="PDB" id="4V5C">
    <property type="method" value="X-ray"/>
    <property type="resolution" value="3.30 A"/>
    <property type="chains" value="BR/DR=1-118"/>
</dbReference>
<dbReference type="PDB" id="4V5D">
    <property type="method" value="X-ray"/>
    <property type="resolution" value="3.50 A"/>
    <property type="chains" value="BR/DR=1-118"/>
</dbReference>
<dbReference type="PDB" id="4V5E">
    <property type="method" value="X-ray"/>
    <property type="resolution" value="3.45 A"/>
    <property type="chains" value="BR/DR=1-118"/>
</dbReference>
<dbReference type="PDB" id="4V5F">
    <property type="method" value="X-ray"/>
    <property type="resolution" value="3.60 A"/>
    <property type="chains" value="BR/DR=1-118"/>
</dbReference>
<dbReference type="PDB" id="4V5G">
    <property type="method" value="X-ray"/>
    <property type="resolution" value="3.60 A"/>
    <property type="chains" value="BR/DR=1-118"/>
</dbReference>
<dbReference type="PDB" id="4V5J">
    <property type="method" value="X-ray"/>
    <property type="resolution" value="3.10 A"/>
    <property type="chains" value="BR/DR=1-118"/>
</dbReference>
<dbReference type="PDB" id="4V5K">
    <property type="method" value="X-ray"/>
    <property type="resolution" value="3.20 A"/>
    <property type="chains" value="BR/DR=1-118"/>
</dbReference>
<dbReference type="PDB" id="4V5L">
    <property type="method" value="X-ray"/>
    <property type="resolution" value="3.10 A"/>
    <property type="chains" value="BR=1-118"/>
</dbReference>
<dbReference type="PDB" id="4V5M">
    <property type="method" value="EM"/>
    <property type="resolution" value="7.80 A"/>
    <property type="chains" value="BR=1-118"/>
</dbReference>
<dbReference type="PDB" id="4V5N">
    <property type="method" value="EM"/>
    <property type="resolution" value="7.60 A"/>
    <property type="chains" value="BR=1-118"/>
</dbReference>
<dbReference type="PDB" id="4V5P">
    <property type="method" value="X-ray"/>
    <property type="resolution" value="3.10 A"/>
    <property type="chains" value="BR/DR=1-118"/>
</dbReference>
<dbReference type="PDB" id="4V5Q">
    <property type="method" value="X-ray"/>
    <property type="resolution" value="3.10 A"/>
    <property type="chains" value="BR/DR=1-118"/>
</dbReference>
<dbReference type="PDB" id="4V5R">
    <property type="method" value="X-ray"/>
    <property type="resolution" value="3.10 A"/>
    <property type="chains" value="BR/DR=1-118"/>
</dbReference>
<dbReference type="PDB" id="4V5S">
    <property type="method" value="X-ray"/>
    <property type="resolution" value="3.10 A"/>
    <property type="chains" value="BR/DR=1-118"/>
</dbReference>
<dbReference type="PDB" id="4V68">
    <property type="method" value="EM"/>
    <property type="resolution" value="6.40 A"/>
    <property type="chains" value="BR=2-118"/>
</dbReference>
<dbReference type="PDB" id="4V6A">
    <property type="method" value="X-ray"/>
    <property type="resolution" value="3.10 A"/>
    <property type="chains" value="BR/DR=1-118"/>
</dbReference>
<dbReference type="PDB" id="4V6F">
    <property type="method" value="X-ray"/>
    <property type="resolution" value="3.10 A"/>
    <property type="chains" value="A0/D0=1-118"/>
</dbReference>
<dbReference type="PDB" id="4V6G">
    <property type="method" value="X-ray"/>
    <property type="resolution" value="3.50 A"/>
    <property type="chains" value="B0/D0=1-118"/>
</dbReference>
<dbReference type="PDB" id="4V7J">
    <property type="method" value="X-ray"/>
    <property type="resolution" value="3.30 A"/>
    <property type="chains" value="AR/BR=1-118"/>
</dbReference>
<dbReference type="PDB" id="4V7K">
    <property type="method" value="X-ray"/>
    <property type="resolution" value="3.60 A"/>
    <property type="chains" value="AR/BR=1-118"/>
</dbReference>
<dbReference type="PDB" id="4V7L">
    <property type="method" value="X-ray"/>
    <property type="resolution" value="3.00 A"/>
    <property type="chains" value="BR/DR=1-118"/>
</dbReference>
<dbReference type="PDB" id="4V7M">
    <property type="method" value="X-ray"/>
    <property type="resolution" value="3.45 A"/>
    <property type="chains" value="BR/DR=1-118"/>
</dbReference>
<dbReference type="PDB" id="4V7W">
    <property type="method" value="X-ray"/>
    <property type="resolution" value="3.00 A"/>
    <property type="chains" value="BR/DR=1-118"/>
</dbReference>
<dbReference type="PDB" id="4V7X">
    <property type="method" value="X-ray"/>
    <property type="resolution" value="3.00 A"/>
    <property type="chains" value="BR/DR=1-118"/>
</dbReference>
<dbReference type="PDB" id="4V7Y">
    <property type="method" value="X-ray"/>
    <property type="resolution" value="3.00 A"/>
    <property type="chains" value="BR/DR=1-118"/>
</dbReference>
<dbReference type="PDB" id="4V7Z">
    <property type="method" value="X-ray"/>
    <property type="resolution" value="3.10 A"/>
    <property type="chains" value="BR/DR=1-118"/>
</dbReference>
<dbReference type="PDB" id="4V87">
    <property type="method" value="X-ray"/>
    <property type="resolution" value="3.10 A"/>
    <property type="chains" value="A0/D0=1-118"/>
</dbReference>
<dbReference type="PDB" id="4V8A">
    <property type="method" value="X-ray"/>
    <property type="resolution" value="3.20 A"/>
    <property type="chains" value="AR/BR=1-118"/>
</dbReference>
<dbReference type="PDB" id="4V8B">
    <property type="method" value="X-ray"/>
    <property type="resolution" value="3.00 A"/>
    <property type="chains" value="B0/D0=1-118"/>
</dbReference>
<dbReference type="PDB" id="4V8C">
    <property type="method" value="X-ray"/>
    <property type="resolution" value="3.30 A"/>
    <property type="chains" value="A0/B0=1-118"/>
</dbReference>
<dbReference type="PDB" id="4V8D">
    <property type="method" value="X-ray"/>
    <property type="resolution" value="3.00 A"/>
    <property type="chains" value="B0/D0=1-118"/>
</dbReference>
<dbReference type="PDB" id="4V8E">
    <property type="method" value="X-ray"/>
    <property type="resolution" value="3.30 A"/>
    <property type="chains" value="A0/C0=1-118"/>
</dbReference>
<dbReference type="PDB" id="4V8F">
    <property type="method" value="X-ray"/>
    <property type="resolution" value="3.30 A"/>
    <property type="chains" value="A0/D0=1-118"/>
</dbReference>
<dbReference type="PDB" id="4V8G">
    <property type="method" value="X-ray"/>
    <property type="resolution" value="3.00 A"/>
    <property type="chains" value="BR/DR=1-118"/>
</dbReference>
<dbReference type="PDB" id="4V8H">
    <property type="method" value="X-ray"/>
    <property type="resolution" value="3.10 A"/>
    <property type="chains" value="BR/DR=1-118"/>
</dbReference>
<dbReference type="PDB" id="4V8I">
    <property type="method" value="X-ray"/>
    <property type="resolution" value="2.70 A"/>
    <property type="chains" value="BR/DR=1-118"/>
</dbReference>
<dbReference type="PDB" id="4V8J">
    <property type="method" value="X-ray"/>
    <property type="resolution" value="3.90 A"/>
    <property type="chains" value="BR/DR=1-118"/>
</dbReference>
<dbReference type="PDB" id="4V8N">
    <property type="method" value="X-ray"/>
    <property type="resolution" value="3.10 A"/>
    <property type="chains" value="BR/DR=1-118"/>
</dbReference>
<dbReference type="PDB" id="4V8O">
    <property type="method" value="X-ray"/>
    <property type="resolution" value="3.80 A"/>
    <property type="chains" value="BR=1-118"/>
</dbReference>
<dbReference type="PDB" id="4V8Q">
    <property type="method" value="X-ray"/>
    <property type="resolution" value="3.10 A"/>
    <property type="chains" value="AR=1-118"/>
</dbReference>
<dbReference type="PDB" id="4V8U">
    <property type="method" value="X-ray"/>
    <property type="resolution" value="3.70 A"/>
    <property type="chains" value="BR/DR=1-118"/>
</dbReference>
<dbReference type="PDB" id="4V8X">
    <property type="method" value="X-ray"/>
    <property type="resolution" value="3.35 A"/>
    <property type="chains" value="BR/DR=1-118"/>
</dbReference>
<dbReference type="PDB" id="4V90">
    <property type="method" value="X-ray"/>
    <property type="resolution" value="2.95 A"/>
    <property type="chains" value="BR=2-118"/>
</dbReference>
<dbReference type="PDB" id="4V95">
    <property type="method" value="X-ray"/>
    <property type="resolution" value="3.20 A"/>
    <property type="chains" value="BR/DR=1-118"/>
</dbReference>
<dbReference type="PDB" id="4V97">
    <property type="method" value="X-ray"/>
    <property type="resolution" value="3.52 A"/>
    <property type="chains" value="BR/DR=1-118"/>
</dbReference>
<dbReference type="PDB" id="4V9A">
    <property type="method" value="X-ray"/>
    <property type="resolution" value="3.30 A"/>
    <property type="chains" value="B0/D0=1-118"/>
</dbReference>
<dbReference type="PDB" id="4V9B">
    <property type="method" value="X-ray"/>
    <property type="resolution" value="3.10 A"/>
    <property type="chains" value="B0/D0=1-118"/>
</dbReference>
<dbReference type="PDB" id="4V9H">
    <property type="method" value="X-ray"/>
    <property type="resolution" value="2.86 A"/>
    <property type="chains" value="BR=1-118"/>
</dbReference>
<dbReference type="PDB" id="4V9I">
    <property type="method" value="X-ray"/>
    <property type="resolution" value="3.30 A"/>
    <property type="chains" value="BR/DR=2-118"/>
</dbReference>
<dbReference type="PDB" id="4V9R">
    <property type="method" value="X-ray"/>
    <property type="resolution" value="3.00 A"/>
    <property type="chains" value="BR/DR=1-118"/>
</dbReference>
<dbReference type="PDB" id="4V9S">
    <property type="method" value="X-ray"/>
    <property type="resolution" value="3.10 A"/>
    <property type="chains" value="BR/DR=1-118"/>
</dbReference>
<dbReference type="PDB" id="4W2E">
    <property type="method" value="X-ray"/>
    <property type="resolution" value="2.90 A"/>
    <property type="chains" value="R=1-118"/>
</dbReference>
<dbReference type="PDB" id="4W2F">
    <property type="method" value="X-ray"/>
    <property type="resolution" value="2.40 A"/>
    <property type="chains" value="BR/DR=1-118"/>
</dbReference>
<dbReference type="PDB" id="4W2G">
    <property type="method" value="X-ray"/>
    <property type="resolution" value="2.55 A"/>
    <property type="chains" value="BR/DR=1-118"/>
</dbReference>
<dbReference type="PDB" id="4W2H">
    <property type="method" value="X-ray"/>
    <property type="resolution" value="2.70 A"/>
    <property type="chains" value="BR/DR=1-118"/>
</dbReference>
<dbReference type="PDB" id="4W2I">
    <property type="method" value="X-ray"/>
    <property type="resolution" value="2.70 A"/>
    <property type="chains" value="BR/DR=1-118"/>
</dbReference>
<dbReference type="PDB" id="4W4G">
    <property type="method" value="X-ray"/>
    <property type="resolution" value="3.30 A"/>
    <property type="chains" value="RR/YR=1-118"/>
</dbReference>
<dbReference type="PDB" id="4WPO">
    <property type="method" value="X-ray"/>
    <property type="resolution" value="2.80 A"/>
    <property type="chains" value="AR/CR=1-118"/>
</dbReference>
<dbReference type="PDB" id="4WQ1">
    <property type="method" value="X-ray"/>
    <property type="resolution" value="3.10 A"/>
    <property type="chains" value="55/98=1-118"/>
</dbReference>
<dbReference type="PDB" id="4WQF">
    <property type="method" value="X-ray"/>
    <property type="resolution" value="2.80 A"/>
    <property type="chains" value="AR/CR=1-118"/>
</dbReference>
<dbReference type="PDB" id="4WQR">
    <property type="method" value="X-ray"/>
    <property type="resolution" value="3.15 A"/>
    <property type="chains" value="55/98=1-118"/>
</dbReference>
<dbReference type="PDB" id="4WQU">
    <property type="method" value="X-ray"/>
    <property type="resolution" value="2.80 A"/>
    <property type="chains" value="AR/CR=1-118"/>
</dbReference>
<dbReference type="PDB" id="4WQY">
    <property type="method" value="X-ray"/>
    <property type="resolution" value="2.80 A"/>
    <property type="chains" value="AR/CR=1-118"/>
</dbReference>
<dbReference type="PDB" id="4WR6">
    <property type="method" value="X-ray"/>
    <property type="resolution" value="3.05 A"/>
    <property type="chains" value="55/98=1-118"/>
</dbReference>
<dbReference type="PDB" id="4WRA">
    <property type="method" value="X-ray"/>
    <property type="resolution" value="3.05 A"/>
    <property type="chains" value="55/98=1-118"/>
</dbReference>
<dbReference type="PDB" id="4WRO">
    <property type="method" value="X-ray"/>
    <property type="resolution" value="3.05 A"/>
    <property type="chains" value="98=1-118"/>
</dbReference>
<dbReference type="PDB" id="4WSD">
    <property type="method" value="X-ray"/>
    <property type="resolution" value="2.95 A"/>
    <property type="chains" value="55/98=1-118"/>
</dbReference>
<dbReference type="PDB" id="4WSM">
    <property type="method" value="X-ray"/>
    <property type="resolution" value="3.30 A"/>
    <property type="chains" value="55/98=1-118"/>
</dbReference>
<dbReference type="PDB" id="4WT1">
    <property type="method" value="X-ray"/>
    <property type="resolution" value="3.05 A"/>
    <property type="chains" value="55/98=1-118"/>
</dbReference>
<dbReference type="PDB" id="4WT8">
    <property type="method" value="X-ray"/>
    <property type="resolution" value="3.40 A"/>
    <property type="chains" value="CQ/DQ=2-118"/>
</dbReference>
<dbReference type="PDB" id="4WU1">
    <property type="method" value="X-ray"/>
    <property type="resolution" value="3.20 A"/>
    <property type="chains" value="55/98=1-118"/>
</dbReference>
<dbReference type="PDB" id="4WZD">
    <property type="method" value="X-ray"/>
    <property type="resolution" value="3.10 A"/>
    <property type="chains" value="55/98=1-118"/>
</dbReference>
<dbReference type="PDB" id="4WZO">
    <property type="method" value="X-ray"/>
    <property type="resolution" value="3.30 A"/>
    <property type="chains" value="55/98=1-118"/>
</dbReference>
<dbReference type="PDB" id="4Y4O">
    <property type="method" value="X-ray"/>
    <property type="resolution" value="2.30 A"/>
    <property type="chains" value="1R/2R=1-118"/>
</dbReference>
<dbReference type="PDB" id="4Y4P">
    <property type="method" value="X-ray"/>
    <property type="resolution" value="2.50 A"/>
    <property type="chains" value="1R/2R=1-118"/>
</dbReference>
<dbReference type="PDB" id="4YPB">
    <property type="method" value="X-ray"/>
    <property type="resolution" value="3.40 A"/>
    <property type="chains" value="RR/YR=1-118"/>
</dbReference>
<dbReference type="PDB" id="4YZV">
    <property type="method" value="X-ray"/>
    <property type="resolution" value="3.10 A"/>
    <property type="chains" value="RR/YR=1-118"/>
</dbReference>
<dbReference type="PDB" id="4Z3S">
    <property type="method" value="X-ray"/>
    <property type="resolution" value="2.65 A"/>
    <property type="chains" value="1R/2R=1-118"/>
</dbReference>
<dbReference type="PDB" id="4Z8C">
    <property type="method" value="X-ray"/>
    <property type="resolution" value="2.90 A"/>
    <property type="chains" value="1R/2R=1-118"/>
</dbReference>
<dbReference type="PDB" id="4ZER">
    <property type="method" value="X-ray"/>
    <property type="resolution" value="3.10 A"/>
    <property type="chains" value="1R/2R=1-118"/>
</dbReference>
<dbReference type="PDB" id="4ZSN">
    <property type="method" value="X-ray"/>
    <property type="resolution" value="3.60 A"/>
    <property type="chains" value="RR/YR=1-118"/>
</dbReference>
<dbReference type="PDB" id="5A9Z">
    <property type="method" value="EM"/>
    <property type="resolution" value="4.70 A"/>
    <property type="chains" value="AO=2-118"/>
</dbReference>
<dbReference type="PDB" id="5AA0">
    <property type="method" value="EM"/>
    <property type="resolution" value="5.00 A"/>
    <property type="chains" value="AO=2-118"/>
</dbReference>
<dbReference type="PDB" id="5CZP">
    <property type="method" value="X-ray"/>
    <property type="resolution" value="3.30 A"/>
    <property type="chains" value="RR/YR=1-118"/>
</dbReference>
<dbReference type="PDB" id="5D8B">
    <property type="method" value="X-ray"/>
    <property type="resolution" value="3.63 A"/>
    <property type="chains" value="HB/L=1-118"/>
</dbReference>
<dbReference type="PDB" id="5DFE">
    <property type="method" value="X-ray"/>
    <property type="resolution" value="3.10 A"/>
    <property type="chains" value="RR/YR=1-118"/>
</dbReference>
<dbReference type="PDB" id="5DOX">
    <property type="method" value="X-ray"/>
    <property type="resolution" value="3.10 A"/>
    <property type="chains" value="1R/2R=1-118"/>
</dbReference>
<dbReference type="PDB" id="5DOY">
    <property type="method" value="X-ray"/>
    <property type="resolution" value="2.60 A"/>
    <property type="chains" value="1R/2R=1-118"/>
</dbReference>
<dbReference type="PDB" id="5E7K">
    <property type="method" value="X-ray"/>
    <property type="resolution" value="3.20 A"/>
    <property type="chains" value="55/98=1-118"/>
</dbReference>
<dbReference type="PDB" id="5E81">
    <property type="method" value="X-ray"/>
    <property type="resolution" value="2.95 A"/>
    <property type="chains" value="55/98=1-118"/>
</dbReference>
<dbReference type="PDB" id="5EL4">
    <property type="method" value="X-ray"/>
    <property type="resolution" value="3.15 A"/>
    <property type="chains" value="55/98=1-118"/>
</dbReference>
<dbReference type="PDB" id="5EL5">
    <property type="method" value="X-ray"/>
    <property type="resolution" value="3.15 A"/>
    <property type="chains" value="55/98=1-118"/>
</dbReference>
<dbReference type="PDB" id="5EL6">
    <property type="method" value="X-ray"/>
    <property type="resolution" value="3.10 A"/>
    <property type="chains" value="55/98=1-118"/>
</dbReference>
<dbReference type="PDB" id="5EL7">
    <property type="method" value="X-ray"/>
    <property type="resolution" value="3.15 A"/>
    <property type="chains" value="55/98=1-118"/>
</dbReference>
<dbReference type="PDB" id="5F8K">
    <property type="method" value="X-ray"/>
    <property type="resolution" value="2.80 A"/>
    <property type="chains" value="1R/2R=1-118"/>
</dbReference>
<dbReference type="PDB" id="5FDU">
    <property type="method" value="X-ray"/>
    <property type="resolution" value="2.90 A"/>
    <property type="chains" value="1R/2R=1-118"/>
</dbReference>
<dbReference type="PDB" id="5FDV">
    <property type="method" value="X-ray"/>
    <property type="resolution" value="2.80 A"/>
    <property type="chains" value="1R/2R=1-118"/>
</dbReference>
<dbReference type="PDB" id="5HAU">
    <property type="method" value="X-ray"/>
    <property type="resolution" value="3.00 A"/>
    <property type="chains" value="1P/2P=1-118"/>
</dbReference>
<dbReference type="PDB" id="5HCP">
    <property type="method" value="X-ray"/>
    <property type="resolution" value="2.89 A"/>
    <property type="chains" value="1R/2R=1-118"/>
</dbReference>
<dbReference type="PDB" id="5HCQ">
    <property type="method" value="X-ray"/>
    <property type="resolution" value="2.80 A"/>
    <property type="chains" value="1R/2R=1-118"/>
</dbReference>
<dbReference type="PDB" id="5HCR">
    <property type="method" value="X-ray"/>
    <property type="resolution" value="2.80 A"/>
    <property type="chains" value="1R/2R=1-118"/>
</dbReference>
<dbReference type="PDB" id="5HD1">
    <property type="method" value="X-ray"/>
    <property type="resolution" value="2.70 A"/>
    <property type="chains" value="1R/2R=1-118"/>
</dbReference>
<dbReference type="PDB" id="5IB7">
    <property type="method" value="X-ray"/>
    <property type="resolution" value="2.99 A"/>
    <property type="chains" value="55/98=1-118"/>
</dbReference>
<dbReference type="PDB" id="5IB8">
    <property type="method" value="X-ray"/>
    <property type="resolution" value="3.13 A"/>
    <property type="chains" value="55/98=1-118"/>
</dbReference>
<dbReference type="PDB" id="5IBB">
    <property type="method" value="X-ray"/>
    <property type="resolution" value="2.96 A"/>
    <property type="chains" value="55/98=1-118"/>
</dbReference>
<dbReference type="PDB" id="5IMQ">
    <property type="method" value="EM"/>
    <property type="resolution" value="3.80 A"/>
    <property type="chains" value="j=1-118"/>
</dbReference>
<dbReference type="PDB" id="5IMR">
    <property type="method" value="EM"/>
    <property type="chains" value="j=1-118"/>
</dbReference>
<dbReference type="PDB" id="5J30">
    <property type="method" value="X-ray"/>
    <property type="resolution" value="3.20 A"/>
    <property type="chains" value="RR/YR=1-118"/>
</dbReference>
<dbReference type="PDB" id="5J3C">
    <property type="method" value="X-ray"/>
    <property type="resolution" value="3.04 A"/>
    <property type="chains" value="RR/YR=1-118"/>
</dbReference>
<dbReference type="PDB" id="5J4B">
    <property type="method" value="X-ray"/>
    <property type="resolution" value="2.60 A"/>
    <property type="chains" value="1R/2R=1-118"/>
</dbReference>
<dbReference type="PDB" id="5J4C">
    <property type="method" value="X-ray"/>
    <property type="resolution" value="2.80 A"/>
    <property type="chains" value="1R/2R=1-118"/>
</dbReference>
<dbReference type="PDB" id="5J8B">
    <property type="method" value="X-ray"/>
    <property type="resolution" value="2.60 A"/>
    <property type="chains" value="R=1-118"/>
</dbReference>
<dbReference type="PDB" id="5NDJ">
    <property type="method" value="X-ray"/>
    <property type="resolution" value="3.15 A"/>
    <property type="chains" value="55/98=1-118"/>
</dbReference>
<dbReference type="PDB" id="5NDK">
    <property type="method" value="X-ray"/>
    <property type="resolution" value="2.95 A"/>
    <property type="chains" value="55/98=1-118"/>
</dbReference>
<dbReference type="PDB" id="5OT7">
    <property type="method" value="EM"/>
    <property type="resolution" value="3.80 A"/>
    <property type="chains" value="s=1-118"/>
</dbReference>
<dbReference type="PDB" id="5UQ7">
    <property type="method" value="EM"/>
    <property type="resolution" value="3.50 A"/>
    <property type="chains" value="R=1-118"/>
</dbReference>
<dbReference type="PDB" id="5UQ8">
    <property type="method" value="EM"/>
    <property type="resolution" value="3.20 A"/>
    <property type="chains" value="R=1-118"/>
</dbReference>
<dbReference type="PDB" id="5VP2">
    <property type="method" value="X-ray"/>
    <property type="resolution" value="2.80 A"/>
    <property type="chains" value="1R/2R=1-118"/>
</dbReference>
<dbReference type="PDB" id="5VPO">
    <property type="method" value="X-ray"/>
    <property type="resolution" value="3.34 A"/>
    <property type="chains" value="RR/YR=1-118"/>
</dbReference>
<dbReference type="PDB" id="5VPP">
    <property type="method" value="X-ray"/>
    <property type="resolution" value="3.90 A"/>
    <property type="chains" value="RR/YR=1-118"/>
</dbReference>
<dbReference type="PDB" id="5W4K">
    <property type="method" value="X-ray"/>
    <property type="resolution" value="2.70 A"/>
    <property type="chains" value="1R/2R=1-118"/>
</dbReference>
<dbReference type="PDB" id="5WIS">
    <property type="method" value="X-ray"/>
    <property type="resolution" value="2.70 A"/>
    <property type="chains" value="1R/2R=1-118"/>
</dbReference>
<dbReference type="PDB" id="5WIT">
    <property type="method" value="X-ray"/>
    <property type="resolution" value="2.60 A"/>
    <property type="chains" value="1R/2R=1-118"/>
</dbReference>
<dbReference type="PDB" id="5ZLU">
    <property type="method" value="EM"/>
    <property type="resolution" value="3.60 A"/>
    <property type="chains" value="k=1-118"/>
</dbReference>
<dbReference type="PDB" id="6BUW">
    <property type="method" value="X-ray"/>
    <property type="resolution" value="3.50 A"/>
    <property type="chains" value="RR/YR=1-118"/>
</dbReference>
<dbReference type="PDB" id="6BZ6">
    <property type="method" value="X-ray"/>
    <property type="resolution" value="3.18 A"/>
    <property type="chains" value="RR/YR=1-118"/>
</dbReference>
<dbReference type="PDB" id="6BZ7">
    <property type="method" value="X-ray"/>
    <property type="resolution" value="3.68 A"/>
    <property type="chains" value="RR/YR=1-118"/>
</dbReference>
<dbReference type="PDB" id="6BZ8">
    <property type="method" value="X-ray"/>
    <property type="resolution" value="3.74 A"/>
    <property type="chains" value="RR/YR=1-118"/>
</dbReference>
<dbReference type="PDB" id="6C5L">
    <property type="method" value="X-ray"/>
    <property type="resolution" value="3.20 A"/>
    <property type="chains" value="BR/DR=1-118"/>
</dbReference>
<dbReference type="PDB" id="6CAE">
    <property type="method" value="X-ray"/>
    <property type="resolution" value="2.60 A"/>
    <property type="chains" value="1R/2R=1-118"/>
</dbReference>
<dbReference type="PDB" id="6CFJ">
    <property type="method" value="X-ray"/>
    <property type="resolution" value="2.80 A"/>
    <property type="chains" value="1R/2R=1-118"/>
</dbReference>
<dbReference type="PDB" id="6CFK">
    <property type="method" value="X-ray"/>
    <property type="resolution" value="2.70 A"/>
    <property type="chains" value="1R/2R=1-118"/>
</dbReference>
<dbReference type="PDB" id="6CFL">
    <property type="method" value="X-ray"/>
    <property type="resolution" value="2.60 A"/>
    <property type="chains" value="1R/2R=1-118"/>
</dbReference>
<dbReference type="PDB" id="6CZR">
    <property type="method" value="X-ray"/>
    <property type="resolution" value="3.14 A"/>
    <property type="chains" value="1R/2R=1-118"/>
</dbReference>
<dbReference type="PDB" id="6FKR">
    <property type="method" value="X-ray"/>
    <property type="resolution" value="3.20 A"/>
    <property type="chains" value="1R/2R=1-118"/>
</dbReference>
<dbReference type="PDB" id="6GSJ">
    <property type="method" value="X-ray"/>
    <property type="resolution" value="2.96 A"/>
    <property type="chains" value="55/98=1-118"/>
</dbReference>
<dbReference type="PDB" id="6GSK">
    <property type="method" value="X-ray"/>
    <property type="resolution" value="3.36 A"/>
    <property type="chains" value="55/98=1-118"/>
</dbReference>
<dbReference type="PDB" id="6GSL">
    <property type="method" value="X-ray"/>
    <property type="resolution" value="3.16 A"/>
    <property type="chains" value="55/98=1-118"/>
</dbReference>
<dbReference type="PDB" id="6GZQ">
    <property type="method" value="EM"/>
    <property type="resolution" value="3.28 A"/>
    <property type="chains" value="M1=2-118"/>
</dbReference>
<dbReference type="PDB" id="6GZX">
    <property type="method" value="EM"/>
    <property type="resolution" value="4.57 A"/>
    <property type="chains" value="M1/M2=2-118"/>
</dbReference>
<dbReference type="PDB" id="6GZZ">
    <property type="method" value="EM"/>
    <property type="resolution" value="4.13 A"/>
    <property type="chains" value="M1/M2=2-118"/>
</dbReference>
<dbReference type="PDB" id="6N9E">
    <property type="method" value="X-ray"/>
    <property type="resolution" value="3.70 A"/>
    <property type="chains" value="1R/2R=1-118"/>
</dbReference>
<dbReference type="PDB" id="6N9F">
    <property type="method" value="X-ray"/>
    <property type="resolution" value="3.70 A"/>
    <property type="chains" value="1R/2R=1-118"/>
</dbReference>
<dbReference type="PDB" id="6ND5">
    <property type="method" value="X-ray"/>
    <property type="resolution" value="2.60 A"/>
    <property type="chains" value="1R/2R=1-118"/>
</dbReference>
<dbReference type="PDB" id="6ND6">
    <property type="method" value="X-ray"/>
    <property type="resolution" value="2.85 A"/>
    <property type="chains" value="1R/2R=1-118"/>
</dbReference>
<dbReference type="PDB" id="6NDK">
    <property type="method" value="X-ray"/>
    <property type="resolution" value="3.64 A"/>
    <property type="chains" value="RR/YR=1-118"/>
</dbReference>
<dbReference type="PDB" id="6NSH">
    <property type="method" value="X-ray"/>
    <property type="resolution" value="3.40 A"/>
    <property type="chains" value="RR/YR=1-118"/>
</dbReference>
<dbReference type="PDB" id="6NTA">
    <property type="method" value="X-ray"/>
    <property type="resolution" value="3.10 A"/>
    <property type="chains" value="RR/YR=1-118"/>
</dbReference>
<dbReference type="PDB" id="6NUO">
    <property type="method" value="X-ray"/>
    <property type="resolution" value="3.20 A"/>
    <property type="chains" value="RR/YR=1-118"/>
</dbReference>
<dbReference type="PDB" id="6NWY">
    <property type="method" value="X-ray"/>
    <property type="resolution" value="3.50 A"/>
    <property type="chains" value="RR/YR=1-118"/>
</dbReference>
<dbReference type="PDB" id="6O3M">
    <property type="method" value="X-ray"/>
    <property type="resolution" value="3.97 A"/>
    <property type="chains" value="RR/YR=1-118"/>
</dbReference>
<dbReference type="PDB" id="6O97">
    <property type="method" value="X-ray"/>
    <property type="resolution" value="2.75 A"/>
    <property type="chains" value="1R/2R=1-118"/>
</dbReference>
<dbReference type="PDB" id="6OF1">
    <property type="method" value="X-ray"/>
    <property type="resolution" value="2.80 A"/>
    <property type="chains" value="1R/2R=1-118"/>
</dbReference>
<dbReference type="PDB" id="6OF6">
    <property type="method" value="X-ray"/>
    <property type="resolution" value="3.20 A"/>
    <property type="chains" value="RR/YR=1-118"/>
</dbReference>
<dbReference type="PDB" id="6OJ2">
    <property type="method" value="X-ray"/>
    <property type="resolution" value="3.20 A"/>
    <property type="chains" value="RR/YR=1-118"/>
</dbReference>
<dbReference type="PDB" id="6OPE">
    <property type="method" value="X-ray"/>
    <property type="resolution" value="3.10 A"/>
    <property type="chains" value="RR/YR=1-118"/>
</dbReference>
<dbReference type="PDB" id="6ORD">
    <property type="method" value="X-ray"/>
    <property type="resolution" value="3.10 A"/>
    <property type="chains" value="RR/YR=1-118"/>
</dbReference>
<dbReference type="PDB" id="6OSI">
    <property type="method" value="X-ray"/>
    <property type="resolution" value="4.14 A"/>
    <property type="chains" value="RR/YR=1-118"/>
</dbReference>
<dbReference type="PDB" id="6OTR">
    <property type="method" value="X-ray"/>
    <property type="resolution" value="3.12 A"/>
    <property type="chains" value="RR/YR=1-118"/>
</dbReference>
<dbReference type="PDB" id="6OXA">
    <property type="method" value="X-ray"/>
    <property type="resolution" value="3.25 A"/>
    <property type="chains" value="RR/YR=1-118"/>
</dbReference>
<dbReference type="PDB" id="6OXI">
    <property type="method" value="X-ray"/>
    <property type="resolution" value="3.50 A"/>
    <property type="chains" value="RR/YR=1-118"/>
</dbReference>
<dbReference type="PDB" id="6Q95">
    <property type="method" value="EM"/>
    <property type="resolution" value="3.70 A"/>
    <property type="chains" value="N=2-118"/>
</dbReference>
<dbReference type="PDB" id="6QNQ">
    <property type="method" value="X-ray"/>
    <property type="resolution" value="3.50 A"/>
    <property type="chains" value="55/98=1-118"/>
</dbReference>
<dbReference type="PDB" id="6QNR">
    <property type="method" value="X-ray"/>
    <property type="resolution" value="3.10 A"/>
    <property type="chains" value="55/98=1-118"/>
</dbReference>
<dbReference type="PDB" id="6UCQ">
    <property type="method" value="X-ray"/>
    <property type="resolution" value="3.50 A"/>
    <property type="chains" value="1R/2R=1-118"/>
</dbReference>
<dbReference type="PDB" id="6UO1">
    <property type="method" value="X-ray"/>
    <property type="resolution" value="2.95 A"/>
    <property type="chains" value="1R/2R=1-118"/>
</dbReference>
<dbReference type="PDB" id="6XHV">
    <property type="method" value="X-ray"/>
    <property type="resolution" value="2.40 A"/>
    <property type="chains" value="1R/2R=1-118"/>
</dbReference>
<dbReference type="PDB" id="6XHW">
    <property type="method" value="X-ray"/>
    <property type="resolution" value="2.50 A"/>
    <property type="chains" value="1R/2R=1-118"/>
</dbReference>
<dbReference type="PDB" id="6XHX">
    <property type="method" value="X-ray"/>
    <property type="resolution" value="2.55 A"/>
    <property type="chains" value="1R/2R=1-118"/>
</dbReference>
<dbReference type="PDB" id="6XHY">
    <property type="method" value="X-ray"/>
    <property type="resolution" value="2.60 A"/>
    <property type="chains" value="1R/2R=1-118"/>
</dbReference>
<dbReference type="PDB" id="6XQD">
    <property type="method" value="X-ray"/>
    <property type="resolution" value="2.80 A"/>
    <property type="chains" value="1R/2R=1-118"/>
</dbReference>
<dbReference type="PDB" id="6XQE">
    <property type="method" value="X-ray"/>
    <property type="resolution" value="3.00 A"/>
    <property type="chains" value="1R/2R=1-118"/>
</dbReference>
<dbReference type="PDB" id="7AZO">
    <property type="method" value="X-ray"/>
    <property type="resolution" value="3.30 A"/>
    <property type="chains" value="L17A/L17B=1-118"/>
</dbReference>
<dbReference type="PDB" id="7AZS">
    <property type="method" value="X-ray"/>
    <property type="resolution" value="3.10 A"/>
    <property type="chains" value="L17A/L17B=1-118"/>
</dbReference>
<dbReference type="PDB" id="7JQL">
    <property type="method" value="X-ray"/>
    <property type="resolution" value="3.00 A"/>
    <property type="chains" value="1R/2R=1-118"/>
</dbReference>
<dbReference type="PDB" id="7JQM">
    <property type="method" value="X-ray"/>
    <property type="resolution" value="3.05 A"/>
    <property type="chains" value="1R/2R=1-118"/>
</dbReference>
<dbReference type="PDB" id="7LH5">
    <property type="method" value="X-ray"/>
    <property type="resolution" value="3.27 A"/>
    <property type="chains" value="BR/DR=1-118"/>
</dbReference>
<dbReference type="PDB" id="7MD7">
    <property type="method" value="X-ray"/>
    <property type="resolution" value="2.80 A"/>
    <property type="chains" value="1R/2R=1-118"/>
</dbReference>
<dbReference type="PDB" id="7RQ8">
    <property type="method" value="X-ray"/>
    <property type="resolution" value="2.50 A"/>
    <property type="chains" value="1R/2R=1-118"/>
</dbReference>
<dbReference type="PDB" id="7RQ9">
    <property type="method" value="X-ray"/>
    <property type="resolution" value="2.60 A"/>
    <property type="chains" value="1R/2R=1-118"/>
</dbReference>
<dbReference type="PDB" id="7RQA">
    <property type="method" value="X-ray"/>
    <property type="resolution" value="2.40 A"/>
    <property type="chains" value="1R/2R=1-118"/>
</dbReference>
<dbReference type="PDB" id="7RQB">
    <property type="method" value="X-ray"/>
    <property type="resolution" value="2.45 A"/>
    <property type="chains" value="1R/2R=1-118"/>
</dbReference>
<dbReference type="PDB" id="7RQC">
    <property type="method" value="X-ray"/>
    <property type="resolution" value="2.50 A"/>
    <property type="chains" value="1R/2R=1-118"/>
</dbReference>
<dbReference type="PDB" id="7RQD">
    <property type="method" value="X-ray"/>
    <property type="resolution" value="2.50 A"/>
    <property type="chains" value="1R/2R=1-118"/>
</dbReference>
<dbReference type="PDB" id="7RQE">
    <property type="method" value="X-ray"/>
    <property type="resolution" value="2.40 A"/>
    <property type="chains" value="1R/2R=1-118"/>
</dbReference>
<dbReference type="PDB" id="7U2H">
    <property type="method" value="X-ray"/>
    <property type="resolution" value="2.55 A"/>
    <property type="chains" value="1R/2R=1-118"/>
</dbReference>
<dbReference type="PDB" id="7U2I">
    <property type="method" value="X-ray"/>
    <property type="resolution" value="2.55 A"/>
    <property type="chains" value="1R/2R=1-118"/>
</dbReference>
<dbReference type="PDB" id="7U2J">
    <property type="method" value="X-ray"/>
    <property type="resolution" value="2.55 A"/>
    <property type="chains" value="1R/2R=1-118"/>
</dbReference>
<dbReference type="PDB" id="8CVJ">
    <property type="method" value="X-ray"/>
    <property type="resolution" value="2.40 A"/>
    <property type="chains" value="1R/2R=1-118"/>
</dbReference>
<dbReference type="PDB" id="8CVK">
    <property type="method" value="X-ray"/>
    <property type="resolution" value="2.50 A"/>
    <property type="chains" value="1R/2R=1-118"/>
</dbReference>
<dbReference type="PDB" id="8CVL">
    <property type="method" value="X-ray"/>
    <property type="resolution" value="2.30 A"/>
    <property type="chains" value="1R/2R=1-118"/>
</dbReference>
<dbReference type="PDB" id="8EKB">
    <property type="method" value="X-ray"/>
    <property type="resolution" value="2.70 A"/>
    <property type="chains" value="1R/2R=1-118"/>
</dbReference>
<dbReference type="PDB" id="8EV6">
    <property type="method" value="X-ray"/>
    <property type="resolution" value="2.95 A"/>
    <property type="chains" value="1R/2R=1-118"/>
</dbReference>
<dbReference type="PDB" id="8EV7">
    <property type="method" value="X-ray"/>
    <property type="resolution" value="2.89 A"/>
    <property type="chains" value="1R/2R=1-118"/>
</dbReference>
<dbReference type="PDB" id="8FC1">
    <property type="method" value="X-ray"/>
    <property type="resolution" value="2.50 A"/>
    <property type="chains" value="1R/2R=1-118"/>
</dbReference>
<dbReference type="PDB" id="8FC2">
    <property type="method" value="X-ray"/>
    <property type="resolution" value="2.50 A"/>
    <property type="chains" value="1R/2R=1-118"/>
</dbReference>
<dbReference type="PDB" id="8FC3">
    <property type="method" value="X-ray"/>
    <property type="resolution" value="2.60 A"/>
    <property type="chains" value="1R/2R=1-118"/>
</dbReference>
<dbReference type="PDB" id="8FC4">
    <property type="method" value="X-ray"/>
    <property type="resolution" value="2.45 A"/>
    <property type="chains" value="1R/2R=1-118"/>
</dbReference>
<dbReference type="PDB" id="8FC5">
    <property type="method" value="X-ray"/>
    <property type="resolution" value="2.65 A"/>
    <property type="chains" value="1R/2R=1-118"/>
</dbReference>
<dbReference type="PDB" id="8FC6">
    <property type="method" value="X-ray"/>
    <property type="resolution" value="2.35 A"/>
    <property type="chains" value="1R/2R=1-118"/>
</dbReference>
<dbReference type="PDB" id="8FOM">
    <property type="method" value="X-ray"/>
    <property type="resolution" value="3.58 A"/>
    <property type="chains" value="RR/YR=1-118"/>
</dbReference>
<dbReference type="PDB" id="8FON">
    <property type="method" value="X-ray"/>
    <property type="resolution" value="3.64 A"/>
    <property type="chains" value="RR/YR=1-118"/>
</dbReference>
<dbReference type="PDB" id="8G29">
    <property type="method" value="X-ray"/>
    <property type="resolution" value="2.55 A"/>
    <property type="chains" value="1R/2R=1-118"/>
</dbReference>
<dbReference type="PDB" id="8G2A">
    <property type="method" value="X-ray"/>
    <property type="resolution" value="2.45 A"/>
    <property type="chains" value="1R/2R=1-118"/>
</dbReference>
<dbReference type="PDB" id="8G2B">
    <property type="method" value="X-ray"/>
    <property type="resolution" value="2.55 A"/>
    <property type="chains" value="1R/2R=1-118"/>
</dbReference>
<dbReference type="PDB" id="8G2C">
    <property type="method" value="X-ray"/>
    <property type="resolution" value="2.65 A"/>
    <property type="chains" value="1R/2R=1-118"/>
</dbReference>
<dbReference type="PDB" id="8G2D">
    <property type="method" value="X-ray"/>
    <property type="resolution" value="2.70 A"/>
    <property type="chains" value="1R/2R=1-118"/>
</dbReference>
<dbReference type="PDB" id="8T8B">
    <property type="method" value="X-ray"/>
    <property type="resolution" value="2.65 A"/>
    <property type="chains" value="1R/2R=1-118"/>
</dbReference>
<dbReference type="PDB" id="8T8C">
    <property type="method" value="X-ray"/>
    <property type="resolution" value="2.60 A"/>
    <property type="chains" value="1R/2R=1-118"/>
</dbReference>
<dbReference type="PDB" id="8UD6">
    <property type="method" value="X-ray"/>
    <property type="resolution" value="2.70 A"/>
    <property type="chains" value="1R/2R=1-118"/>
</dbReference>
<dbReference type="PDB" id="8UD7">
    <property type="method" value="X-ray"/>
    <property type="resolution" value="2.55 A"/>
    <property type="chains" value="1R/2R=1-118"/>
</dbReference>
<dbReference type="PDB" id="8UD8">
    <property type="method" value="X-ray"/>
    <property type="resolution" value="2.60 A"/>
    <property type="chains" value="1R/2R=1-118"/>
</dbReference>
<dbReference type="PDB" id="8UVR">
    <property type="method" value="X-ray"/>
    <property type="resolution" value="2.60 A"/>
    <property type="chains" value="1R/2R=1-118"/>
</dbReference>
<dbReference type="PDB" id="8UVS">
    <property type="method" value="X-ray"/>
    <property type="resolution" value="2.75 A"/>
    <property type="chains" value="1R/2R=1-118"/>
</dbReference>
<dbReference type="PDB" id="8VTU">
    <property type="method" value="X-ray"/>
    <property type="resolution" value="2.40 A"/>
    <property type="chains" value="1R/2R=1-118"/>
</dbReference>
<dbReference type="PDB" id="8VTV">
    <property type="method" value="X-ray"/>
    <property type="resolution" value="2.55 A"/>
    <property type="chains" value="1R/2R=1-118"/>
</dbReference>
<dbReference type="PDB" id="8VTW">
    <property type="method" value="X-ray"/>
    <property type="resolution" value="2.35 A"/>
    <property type="chains" value="1R/2R=1-118"/>
</dbReference>
<dbReference type="PDB" id="8VTX">
    <property type="method" value="X-ray"/>
    <property type="resolution" value="2.40 A"/>
    <property type="chains" value="1R/2R=1-118"/>
</dbReference>
<dbReference type="PDB" id="8VTY">
    <property type="method" value="X-ray"/>
    <property type="resolution" value="2.60 A"/>
    <property type="chains" value="1R/2R=1-118"/>
</dbReference>
<dbReference type="PDB" id="8WV1">
    <property type="method" value="X-ray"/>
    <property type="resolution" value="3.99 A"/>
    <property type="chains" value="M/m=1-118"/>
</dbReference>
<dbReference type="PDB" id="9B00">
    <property type="method" value="X-ray"/>
    <property type="resolution" value="2.80 A"/>
    <property type="chains" value="1R/2R=1-118"/>
</dbReference>
<dbReference type="PDB" id="9D0J">
    <property type="method" value="X-ray"/>
    <property type="resolution" value="2.50 A"/>
    <property type="chains" value="1R/2R=1-118"/>
</dbReference>
<dbReference type="PDB" id="9D7R">
    <property type="method" value="X-ray"/>
    <property type="resolution" value="2.70 A"/>
    <property type="chains" value="1R/2R=1-118"/>
</dbReference>
<dbReference type="PDB" id="9D7S">
    <property type="method" value="X-ray"/>
    <property type="resolution" value="2.85 A"/>
    <property type="chains" value="1R/2R=1-118"/>
</dbReference>
<dbReference type="PDB" id="9D7T">
    <property type="method" value="X-ray"/>
    <property type="resolution" value="2.70 A"/>
    <property type="chains" value="1R/2R=1-118"/>
</dbReference>
<dbReference type="PDB" id="9DFC">
    <property type="method" value="X-ray"/>
    <property type="resolution" value="2.50 A"/>
    <property type="chains" value="1R/2R=1-118"/>
</dbReference>
<dbReference type="PDB" id="9DFD">
    <property type="method" value="X-ray"/>
    <property type="resolution" value="2.60 A"/>
    <property type="chains" value="1R/2R=1-118"/>
</dbReference>
<dbReference type="PDB" id="9DFE">
    <property type="method" value="X-ray"/>
    <property type="resolution" value="2.60 A"/>
    <property type="chains" value="1R/2R=1-118"/>
</dbReference>
<dbReference type="PDBsum" id="1GD8"/>
<dbReference type="PDBsum" id="1VVJ"/>
<dbReference type="PDBsum" id="1VY4"/>
<dbReference type="PDBsum" id="1VY5"/>
<dbReference type="PDBsum" id="1VY6"/>
<dbReference type="PDBsum" id="1VY7"/>
<dbReference type="PDBsum" id="4L47"/>
<dbReference type="PDBsum" id="4L71"/>
<dbReference type="PDBsum" id="4LEL"/>
<dbReference type="PDBsum" id="4LFZ"/>
<dbReference type="PDBsum" id="4LNT"/>
<dbReference type="PDBsum" id="4LSK"/>
<dbReference type="PDBsum" id="4LT8"/>
<dbReference type="PDBsum" id="4P6F"/>
<dbReference type="PDBsum" id="4P70"/>
<dbReference type="PDBsum" id="4TUA"/>
<dbReference type="PDBsum" id="4TUB"/>
<dbReference type="PDBsum" id="4TUC"/>
<dbReference type="PDBsum" id="4TUD"/>
<dbReference type="PDBsum" id="4TUE"/>
<dbReference type="PDBsum" id="4V4P"/>
<dbReference type="PDBsum" id="4V4R"/>
<dbReference type="PDBsum" id="4V4S"/>
<dbReference type="PDBsum" id="4V4T"/>
<dbReference type="PDBsum" id="4V4X"/>
<dbReference type="PDBsum" id="4V4Y"/>
<dbReference type="PDBsum" id="4V4Z"/>
<dbReference type="PDBsum" id="4V51"/>
<dbReference type="PDBsum" id="4V5A"/>
<dbReference type="PDBsum" id="4V5C"/>
<dbReference type="PDBsum" id="4V5D"/>
<dbReference type="PDBsum" id="4V5E"/>
<dbReference type="PDBsum" id="4V5F"/>
<dbReference type="PDBsum" id="4V5G"/>
<dbReference type="PDBsum" id="4V5J"/>
<dbReference type="PDBsum" id="4V5K"/>
<dbReference type="PDBsum" id="4V5L"/>
<dbReference type="PDBsum" id="4V5M"/>
<dbReference type="PDBsum" id="4V5N"/>
<dbReference type="PDBsum" id="4V5P"/>
<dbReference type="PDBsum" id="4V5Q"/>
<dbReference type="PDBsum" id="4V5R"/>
<dbReference type="PDBsum" id="4V5S"/>
<dbReference type="PDBsum" id="4V68"/>
<dbReference type="PDBsum" id="4V6A"/>
<dbReference type="PDBsum" id="4V6F"/>
<dbReference type="PDBsum" id="4V6G"/>
<dbReference type="PDBsum" id="4V7J"/>
<dbReference type="PDBsum" id="4V7K"/>
<dbReference type="PDBsum" id="4V7L"/>
<dbReference type="PDBsum" id="4V7M"/>
<dbReference type="PDBsum" id="4V7W"/>
<dbReference type="PDBsum" id="4V7X"/>
<dbReference type="PDBsum" id="4V7Y"/>
<dbReference type="PDBsum" id="4V7Z"/>
<dbReference type="PDBsum" id="4V87"/>
<dbReference type="PDBsum" id="4V8A"/>
<dbReference type="PDBsum" id="4V8B"/>
<dbReference type="PDBsum" id="4V8C"/>
<dbReference type="PDBsum" id="4V8D"/>
<dbReference type="PDBsum" id="4V8E"/>
<dbReference type="PDBsum" id="4V8F"/>
<dbReference type="PDBsum" id="4V8G"/>
<dbReference type="PDBsum" id="4V8H"/>
<dbReference type="PDBsum" id="4V8I"/>
<dbReference type="PDBsum" id="4V8J"/>
<dbReference type="PDBsum" id="4V8N"/>
<dbReference type="PDBsum" id="4V8O"/>
<dbReference type="PDBsum" id="4V8Q"/>
<dbReference type="PDBsum" id="4V8U"/>
<dbReference type="PDBsum" id="4V8X"/>
<dbReference type="PDBsum" id="4V90"/>
<dbReference type="PDBsum" id="4V95"/>
<dbReference type="PDBsum" id="4V97"/>
<dbReference type="PDBsum" id="4V9A"/>
<dbReference type="PDBsum" id="4V9B"/>
<dbReference type="PDBsum" id="4V9H"/>
<dbReference type="PDBsum" id="4V9I"/>
<dbReference type="PDBsum" id="4V9R"/>
<dbReference type="PDBsum" id="4V9S"/>
<dbReference type="PDBsum" id="4W2E"/>
<dbReference type="PDBsum" id="4W2F"/>
<dbReference type="PDBsum" id="4W2G"/>
<dbReference type="PDBsum" id="4W2H"/>
<dbReference type="PDBsum" id="4W2I"/>
<dbReference type="PDBsum" id="4W4G"/>
<dbReference type="PDBsum" id="4WPO"/>
<dbReference type="PDBsum" id="4WQ1"/>
<dbReference type="PDBsum" id="4WQF"/>
<dbReference type="PDBsum" id="4WQR"/>
<dbReference type="PDBsum" id="4WQU"/>
<dbReference type="PDBsum" id="4WQY"/>
<dbReference type="PDBsum" id="4WR6"/>
<dbReference type="PDBsum" id="4WRA"/>
<dbReference type="PDBsum" id="4WRO"/>
<dbReference type="PDBsum" id="4WSD"/>
<dbReference type="PDBsum" id="4WSM"/>
<dbReference type="PDBsum" id="4WT1"/>
<dbReference type="PDBsum" id="4WT8"/>
<dbReference type="PDBsum" id="4WU1"/>
<dbReference type="PDBsum" id="4WZD"/>
<dbReference type="PDBsum" id="4WZO"/>
<dbReference type="PDBsum" id="4Y4O"/>
<dbReference type="PDBsum" id="4Y4P"/>
<dbReference type="PDBsum" id="4YPB"/>
<dbReference type="PDBsum" id="4YZV"/>
<dbReference type="PDBsum" id="4Z3S"/>
<dbReference type="PDBsum" id="4Z8C"/>
<dbReference type="PDBsum" id="4ZER"/>
<dbReference type="PDBsum" id="4ZSN"/>
<dbReference type="PDBsum" id="5A9Z"/>
<dbReference type="PDBsum" id="5AA0"/>
<dbReference type="PDBsum" id="5CZP"/>
<dbReference type="PDBsum" id="5D8B"/>
<dbReference type="PDBsum" id="5DFE"/>
<dbReference type="PDBsum" id="5DOX"/>
<dbReference type="PDBsum" id="5DOY"/>
<dbReference type="PDBsum" id="5E7K"/>
<dbReference type="PDBsum" id="5E81"/>
<dbReference type="PDBsum" id="5EL4"/>
<dbReference type="PDBsum" id="5EL5"/>
<dbReference type="PDBsum" id="5EL6"/>
<dbReference type="PDBsum" id="5EL7"/>
<dbReference type="PDBsum" id="5F8K"/>
<dbReference type="PDBsum" id="5FDU"/>
<dbReference type="PDBsum" id="5FDV"/>
<dbReference type="PDBsum" id="5HAU"/>
<dbReference type="PDBsum" id="5HCP"/>
<dbReference type="PDBsum" id="5HCQ"/>
<dbReference type="PDBsum" id="5HCR"/>
<dbReference type="PDBsum" id="5HD1"/>
<dbReference type="PDBsum" id="5IB7"/>
<dbReference type="PDBsum" id="5IB8"/>
<dbReference type="PDBsum" id="5IBB"/>
<dbReference type="PDBsum" id="5IMQ"/>
<dbReference type="PDBsum" id="5IMR"/>
<dbReference type="PDBsum" id="5J30"/>
<dbReference type="PDBsum" id="5J3C"/>
<dbReference type="PDBsum" id="5J4B"/>
<dbReference type="PDBsum" id="5J4C"/>
<dbReference type="PDBsum" id="5J8B"/>
<dbReference type="PDBsum" id="5NDJ"/>
<dbReference type="PDBsum" id="5NDK"/>
<dbReference type="PDBsum" id="5OT7"/>
<dbReference type="PDBsum" id="5UQ7"/>
<dbReference type="PDBsum" id="5UQ8"/>
<dbReference type="PDBsum" id="5VP2"/>
<dbReference type="PDBsum" id="5VPO"/>
<dbReference type="PDBsum" id="5VPP"/>
<dbReference type="PDBsum" id="5W4K"/>
<dbReference type="PDBsum" id="5WIS"/>
<dbReference type="PDBsum" id="5WIT"/>
<dbReference type="PDBsum" id="5ZLU"/>
<dbReference type="PDBsum" id="6BUW"/>
<dbReference type="PDBsum" id="6BZ6"/>
<dbReference type="PDBsum" id="6BZ7"/>
<dbReference type="PDBsum" id="6BZ8"/>
<dbReference type="PDBsum" id="6C5L"/>
<dbReference type="PDBsum" id="6CAE"/>
<dbReference type="PDBsum" id="6CFJ"/>
<dbReference type="PDBsum" id="6CFK"/>
<dbReference type="PDBsum" id="6CFL"/>
<dbReference type="PDBsum" id="6CZR"/>
<dbReference type="PDBsum" id="6FKR"/>
<dbReference type="PDBsum" id="6GSJ"/>
<dbReference type="PDBsum" id="6GSK"/>
<dbReference type="PDBsum" id="6GSL"/>
<dbReference type="PDBsum" id="6GZQ"/>
<dbReference type="PDBsum" id="6GZX"/>
<dbReference type="PDBsum" id="6GZZ"/>
<dbReference type="PDBsum" id="6N9E"/>
<dbReference type="PDBsum" id="6N9F"/>
<dbReference type="PDBsum" id="6ND5"/>
<dbReference type="PDBsum" id="6ND6"/>
<dbReference type="PDBsum" id="6NDK"/>
<dbReference type="PDBsum" id="6NSH"/>
<dbReference type="PDBsum" id="6NTA"/>
<dbReference type="PDBsum" id="6NUO"/>
<dbReference type="PDBsum" id="6NWY"/>
<dbReference type="PDBsum" id="6O3M"/>
<dbReference type="PDBsum" id="6O97"/>
<dbReference type="PDBsum" id="6OF1"/>
<dbReference type="PDBsum" id="6OF6"/>
<dbReference type="PDBsum" id="6OJ2"/>
<dbReference type="PDBsum" id="6OPE"/>
<dbReference type="PDBsum" id="6ORD"/>
<dbReference type="PDBsum" id="6OSI"/>
<dbReference type="PDBsum" id="6OTR"/>
<dbReference type="PDBsum" id="6OXA"/>
<dbReference type="PDBsum" id="6OXI"/>
<dbReference type="PDBsum" id="6Q95"/>
<dbReference type="PDBsum" id="6QNQ"/>
<dbReference type="PDBsum" id="6QNR"/>
<dbReference type="PDBsum" id="6UCQ"/>
<dbReference type="PDBsum" id="6UO1"/>
<dbReference type="PDBsum" id="6XHV"/>
<dbReference type="PDBsum" id="6XHW"/>
<dbReference type="PDBsum" id="6XHX"/>
<dbReference type="PDBsum" id="6XHY"/>
<dbReference type="PDBsum" id="6XQD"/>
<dbReference type="PDBsum" id="6XQE"/>
<dbReference type="PDBsum" id="7AZO"/>
<dbReference type="PDBsum" id="7AZS"/>
<dbReference type="PDBsum" id="7JQL"/>
<dbReference type="PDBsum" id="7JQM"/>
<dbReference type="PDBsum" id="7LH5"/>
<dbReference type="PDBsum" id="7MD7"/>
<dbReference type="PDBsum" id="7RQ8"/>
<dbReference type="PDBsum" id="7RQ9"/>
<dbReference type="PDBsum" id="7RQA"/>
<dbReference type="PDBsum" id="7RQB"/>
<dbReference type="PDBsum" id="7RQC"/>
<dbReference type="PDBsum" id="7RQD"/>
<dbReference type="PDBsum" id="7RQE"/>
<dbReference type="PDBsum" id="7U2H"/>
<dbReference type="PDBsum" id="7U2I"/>
<dbReference type="PDBsum" id="7U2J"/>
<dbReference type="PDBsum" id="8CVJ"/>
<dbReference type="PDBsum" id="8CVK"/>
<dbReference type="PDBsum" id="8CVL"/>
<dbReference type="PDBsum" id="8EKB"/>
<dbReference type="PDBsum" id="8EV6"/>
<dbReference type="PDBsum" id="8EV7"/>
<dbReference type="PDBsum" id="8FC1"/>
<dbReference type="PDBsum" id="8FC2"/>
<dbReference type="PDBsum" id="8FC3"/>
<dbReference type="PDBsum" id="8FC4"/>
<dbReference type="PDBsum" id="8FC5"/>
<dbReference type="PDBsum" id="8FC6"/>
<dbReference type="PDBsum" id="8FOM"/>
<dbReference type="PDBsum" id="8FON"/>
<dbReference type="PDBsum" id="8G29"/>
<dbReference type="PDBsum" id="8G2A"/>
<dbReference type="PDBsum" id="8G2B"/>
<dbReference type="PDBsum" id="8G2C"/>
<dbReference type="PDBsum" id="8G2D"/>
<dbReference type="PDBsum" id="8T8B"/>
<dbReference type="PDBsum" id="8T8C"/>
<dbReference type="PDBsum" id="8UD6"/>
<dbReference type="PDBsum" id="8UD7"/>
<dbReference type="PDBsum" id="8UD8"/>
<dbReference type="PDBsum" id="8UVR"/>
<dbReference type="PDBsum" id="8UVS"/>
<dbReference type="PDBsum" id="8VTU"/>
<dbReference type="PDBsum" id="8VTV"/>
<dbReference type="PDBsum" id="8VTW"/>
<dbReference type="PDBsum" id="8VTX"/>
<dbReference type="PDBsum" id="8VTY"/>
<dbReference type="PDBsum" id="8WV1"/>
<dbReference type="PDBsum" id="9B00"/>
<dbReference type="PDBsum" id="9D0J"/>
<dbReference type="PDBsum" id="9D7R"/>
<dbReference type="PDBsum" id="9D7S"/>
<dbReference type="PDBsum" id="9D7T"/>
<dbReference type="PDBsum" id="9DFC"/>
<dbReference type="PDBsum" id="9DFD"/>
<dbReference type="PDBsum" id="9DFE"/>
<dbReference type="EMDB" id="EMD-0101"/>
<dbReference type="EMDB" id="EMD-0104"/>
<dbReference type="EMDB" id="EMD-0105"/>
<dbReference type="EMDB" id="EMD-3852"/>
<dbReference type="EMDB" id="EMD-4475"/>
<dbReference type="EMDB" id="EMD-6934"/>
<dbReference type="EMDB" id="EMD-8596"/>
<dbReference type="EMDB" id="EMD-8597"/>
<dbReference type="SMR" id="Q9Z9H5"/>
<dbReference type="IntAct" id="Q9Z9H5">
    <property type="interactions" value="8"/>
</dbReference>
<dbReference type="EnsemblBacteria" id="BAD71486">
    <property type="protein sequence ID" value="BAD71486"/>
    <property type="gene ID" value="BAD71486"/>
</dbReference>
<dbReference type="GeneID" id="3168022"/>
<dbReference type="KEGG" id="ttj:TTHA1663"/>
<dbReference type="PATRIC" id="fig|300852.9.peg.1633"/>
<dbReference type="eggNOG" id="COG0203">
    <property type="taxonomic scope" value="Bacteria"/>
</dbReference>
<dbReference type="HOGENOM" id="CLU_074407_2_0_0"/>
<dbReference type="PhylomeDB" id="Q9Z9H5"/>
<dbReference type="EvolutionaryTrace" id="Q9Z9H5"/>
<dbReference type="Proteomes" id="UP000000532">
    <property type="component" value="Chromosome"/>
</dbReference>
<dbReference type="GO" id="GO:0022625">
    <property type="term" value="C:cytosolic large ribosomal subunit"/>
    <property type="evidence" value="ECO:0007669"/>
    <property type="project" value="TreeGrafter"/>
</dbReference>
<dbReference type="GO" id="GO:0003735">
    <property type="term" value="F:structural constituent of ribosome"/>
    <property type="evidence" value="ECO:0007669"/>
    <property type="project" value="InterPro"/>
</dbReference>
<dbReference type="GO" id="GO:0006412">
    <property type="term" value="P:translation"/>
    <property type="evidence" value="ECO:0007669"/>
    <property type="project" value="UniProtKB-UniRule"/>
</dbReference>
<dbReference type="FunFam" id="3.90.1030.10:FF:000001">
    <property type="entry name" value="50S ribosomal protein L17"/>
    <property type="match status" value="1"/>
</dbReference>
<dbReference type="Gene3D" id="3.90.1030.10">
    <property type="entry name" value="Ribosomal protein L17"/>
    <property type="match status" value="1"/>
</dbReference>
<dbReference type="HAMAP" id="MF_01368">
    <property type="entry name" value="Ribosomal_bL17"/>
    <property type="match status" value="1"/>
</dbReference>
<dbReference type="InterPro" id="IPR000456">
    <property type="entry name" value="Ribosomal_bL17"/>
</dbReference>
<dbReference type="InterPro" id="IPR036373">
    <property type="entry name" value="Ribosomal_bL17_sf"/>
</dbReference>
<dbReference type="NCBIfam" id="TIGR00059">
    <property type="entry name" value="L17"/>
    <property type="match status" value="1"/>
</dbReference>
<dbReference type="PANTHER" id="PTHR14413:SF16">
    <property type="entry name" value="LARGE RIBOSOMAL SUBUNIT PROTEIN BL17M"/>
    <property type="match status" value="1"/>
</dbReference>
<dbReference type="PANTHER" id="PTHR14413">
    <property type="entry name" value="RIBOSOMAL PROTEIN L17"/>
    <property type="match status" value="1"/>
</dbReference>
<dbReference type="Pfam" id="PF01196">
    <property type="entry name" value="Ribosomal_L17"/>
    <property type="match status" value="1"/>
</dbReference>
<dbReference type="SUPFAM" id="SSF64263">
    <property type="entry name" value="Prokaryotic ribosomal protein L17"/>
    <property type="match status" value="1"/>
</dbReference>